<proteinExistence type="predicted"/>
<name>YWGA_BACSU</name>
<reference key="1">
    <citation type="journal article" date="1997" name="Microbiology">
        <title>The Bacillus subtilis genome from gerBC (311 degrees) to licR (334 degrees).</title>
        <authorList>
            <person name="Presecan E."/>
            <person name="Moszer I."/>
            <person name="Boursier L."/>
            <person name="Cruz Ramos H."/>
            <person name="De La Fuente V."/>
            <person name="Hullo M.-F."/>
            <person name="Lelong C."/>
            <person name="Schleich S."/>
            <person name="Sekowska A."/>
            <person name="Song B.H."/>
            <person name="Villani G."/>
            <person name="Kunst F."/>
            <person name="Danchin A."/>
            <person name="Glaser P."/>
        </authorList>
    </citation>
    <scope>NUCLEOTIDE SEQUENCE [GENOMIC DNA]</scope>
    <source>
        <strain>168</strain>
    </source>
</reference>
<reference key="2">
    <citation type="journal article" date="1997" name="Nature">
        <title>The complete genome sequence of the Gram-positive bacterium Bacillus subtilis.</title>
        <authorList>
            <person name="Kunst F."/>
            <person name="Ogasawara N."/>
            <person name="Moszer I."/>
            <person name="Albertini A.M."/>
            <person name="Alloni G."/>
            <person name="Azevedo V."/>
            <person name="Bertero M.G."/>
            <person name="Bessieres P."/>
            <person name="Bolotin A."/>
            <person name="Borchert S."/>
            <person name="Borriss R."/>
            <person name="Boursier L."/>
            <person name="Brans A."/>
            <person name="Braun M."/>
            <person name="Brignell S.C."/>
            <person name="Bron S."/>
            <person name="Brouillet S."/>
            <person name="Bruschi C.V."/>
            <person name="Caldwell B."/>
            <person name="Capuano V."/>
            <person name="Carter N.M."/>
            <person name="Choi S.-K."/>
            <person name="Codani J.-J."/>
            <person name="Connerton I.F."/>
            <person name="Cummings N.J."/>
            <person name="Daniel R.A."/>
            <person name="Denizot F."/>
            <person name="Devine K.M."/>
            <person name="Duesterhoeft A."/>
            <person name="Ehrlich S.D."/>
            <person name="Emmerson P.T."/>
            <person name="Entian K.-D."/>
            <person name="Errington J."/>
            <person name="Fabret C."/>
            <person name="Ferrari E."/>
            <person name="Foulger D."/>
            <person name="Fritz C."/>
            <person name="Fujita M."/>
            <person name="Fujita Y."/>
            <person name="Fuma S."/>
            <person name="Galizzi A."/>
            <person name="Galleron N."/>
            <person name="Ghim S.-Y."/>
            <person name="Glaser P."/>
            <person name="Goffeau A."/>
            <person name="Golightly E.J."/>
            <person name="Grandi G."/>
            <person name="Guiseppi G."/>
            <person name="Guy B.J."/>
            <person name="Haga K."/>
            <person name="Haiech J."/>
            <person name="Harwood C.R."/>
            <person name="Henaut A."/>
            <person name="Hilbert H."/>
            <person name="Holsappel S."/>
            <person name="Hosono S."/>
            <person name="Hullo M.-F."/>
            <person name="Itaya M."/>
            <person name="Jones L.-M."/>
            <person name="Joris B."/>
            <person name="Karamata D."/>
            <person name="Kasahara Y."/>
            <person name="Klaerr-Blanchard M."/>
            <person name="Klein C."/>
            <person name="Kobayashi Y."/>
            <person name="Koetter P."/>
            <person name="Koningstein G."/>
            <person name="Krogh S."/>
            <person name="Kumano M."/>
            <person name="Kurita K."/>
            <person name="Lapidus A."/>
            <person name="Lardinois S."/>
            <person name="Lauber J."/>
            <person name="Lazarevic V."/>
            <person name="Lee S.-M."/>
            <person name="Levine A."/>
            <person name="Liu H."/>
            <person name="Masuda S."/>
            <person name="Mauel C."/>
            <person name="Medigue C."/>
            <person name="Medina N."/>
            <person name="Mellado R.P."/>
            <person name="Mizuno M."/>
            <person name="Moestl D."/>
            <person name="Nakai S."/>
            <person name="Noback M."/>
            <person name="Noone D."/>
            <person name="O'Reilly M."/>
            <person name="Ogawa K."/>
            <person name="Ogiwara A."/>
            <person name="Oudega B."/>
            <person name="Park S.-H."/>
            <person name="Parro V."/>
            <person name="Pohl T.M."/>
            <person name="Portetelle D."/>
            <person name="Porwollik S."/>
            <person name="Prescott A.M."/>
            <person name="Presecan E."/>
            <person name="Pujic P."/>
            <person name="Purnelle B."/>
            <person name="Rapoport G."/>
            <person name="Rey M."/>
            <person name="Reynolds S."/>
            <person name="Rieger M."/>
            <person name="Rivolta C."/>
            <person name="Rocha E."/>
            <person name="Roche B."/>
            <person name="Rose M."/>
            <person name="Sadaie Y."/>
            <person name="Sato T."/>
            <person name="Scanlan E."/>
            <person name="Schleich S."/>
            <person name="Schroeter R."/>
            <person name="Scoffone F."/>
            <person name="Sekiguchi J."/>
            <person name="Sekowska A."/>
            <person name="Seror S.J."/>
            <person name="Serror P."/>
            <person name="Shin B.-S."/>
            <person name="Soldo B."/>
            <person name="Sorokin A."/>
            <person name="Tacconi E."/>
            <person name="Takagi T."/>
            <person name="Takahashi H."/>
            <person name="Takemaru K."/>
            <person name="Takeuchi M."/>
            <person name="Tamakoshi A."/>
            <person name="Tanaka T."/>
            <person name="Terpstra P."/>
            <person name="Tognoni A."/>
            <person name="Tosato V."/>
            <person name="Uchiyama S."/>
            <person name="Vandenbol M."/>
            <person name="Vannier F."/>
            <person name="Vassarotti A."/>
            <person name="Viari A."/>
            <person name="Wambutt R."/>
            <person name="Wedler E."/>
            <person name="Wedler H."/>
            <person name="Weitzenegger T."/>
            <person name="Winters P."/>
            <person name="Wipat A."/>
            <person name="Yamamoto H."/>
            <person name="Yamane K."/>
            <person name="Yasumoto K."/>
            <person name="Yata K."/>
            <person name="Yoshida K."/>
            <person name="Yoshikawa H.-F."/>
            <person name="Zumstein E."/>
            <person name="Yoshikawa H."/>
            <person name="Danchin A."/>
        </authorList>
    </citation>
    <scope>NUCLEOTIDE SEQUENCE [LARGE SCALE GENOMIC DNA]</scope>
    <source>
        <strain>168</strain>
    </source>
</reference>
<accession>P71046</accession>
<accession>Q794Y7</accession>
<keyword id="KW-1185">Reference proteome</keyword>
<feature type="chain" id="PRO_0000360570" description="Uncharacterized protein YwgA">
    <location>
        <begin position="1"/>
        <end position="166"/>
    </location>
</feature>
<organism>
    <name type="scientific">Bacillus subtilis (strain 168)</name>
    <dbReference type="NCBI Taxonomy" id="224308"/>
    <lineage>
        <taxon>Bacteria</taxon>
        <taxon>Bacillati</taxon>
        <taxon>Bacillota</taxon>
        <taxon>Bacilli</taxon>
        <taxon>Bacillales</taxon>
        <taxon>Bacillaceae</taxon>
        <taxon>Bacillus</taxon>
    </lineage>
</organism>
<sequence length="166" mass="19737">MLKEHAKLMKVFSDSGEIIGRKKLQKMIYIAKKMQFPFYEKYDFHFYGPYSEELTLQIEELCNLGFLHEVKEKKGGYFQYRYSLTETGSAFLDHADLDMPDMKGYIDSVNSRSSRFLELVSTILYFDGLEDEEKKEKVFTIKSKQKYTNEEYDEALQYIEELKQIC</sequence>
<gene>
    <name type="primary">ywgA</name>
    <name type="ordered locus">BSU37590</name>
</gene>
<protein>
    <recommendedName>
        <fullName>Uncharacterized protein YwgA</fullName>
    </recommendedName>
</protein>
<dbReference type="EMBL" id="Z80355">
    <property type="protein sequence ID" value="CAB02495.1"/>
    <property type="molecule type" value="Genomic_DNA"/>
</dbReference>
<dbReference type="EMBL" id="AL009126">
    <property type="protein sequence ID" value="CAB15786.1"/>
    <property type="molecule type" value="Genomic_DNA"/>
</dbReference>
<dbReference type="PIR" id="H70056">
    <property type="entry name" value="H70056"/>
</dbReference>
<dbReference type="RefSeq" id="NP_391639.1">
    <property type="nucleotide sequence ID" value="NC_000964.3"/>
</dbReference>
<dbReference type="RefSeq" id="WP_003227524.1">
    <property type="nucleotide sequence ID" value="NZ_OZ025638.1"/>
</dbReference>
<dbReference type="SMR" id="P71046"/>
<dbReference type="FunCoup" id="P71046">
    <property type="interactions" value="77"/>
</dbReference>
<dbReference type="STRING" id="224308.BSU37590"/>
<dbReference type="PaxDb" id="224308-BSU37590"/>
<dbReference type="EnsemblBacteria" id="CAB15786">
    <property type="protein sequence ID" value="CAB15786"/>
    <property type="gene ID" value="BSU_37590"/>
</dbReference>
<dbReference type="GeneID" id="937077"/>
<dbReference type="KEGG" id="bsu:BSU37590"/>
<dbReference type="PATRIC" id="fig|224308.179.peg.4071"/>
<dbReference type="eggNOG" id="COG3465">
    <property type="taxonomic scope" value="Bacteria"/>
</dbReference>
<dbReference type="InParanoid" id="P71046"/>
<dbReference type="OrthoDB" id="5507947at2"/>
<dbReference type="BioCyc" id="BSUB:BSU37590-MONOMER"/>
<dbReference type="Proteomes" id="UP000001570">
    <property type="component" value="Chromosome"/>
</dbReference>